<sequence length="142" mass="15134">MAKKIDAYIKLQVKSGSANPSPPVGPALGQKGVNIMEFCKAFNARTEKMEKGMPIPVVITVYSDRSFTFETKTPPASFLLKTAAGLKSGSPRPNTQKVGTIARAKIQEIAETKAADMTGADIEAMTRSIEGTARSMGLVVED</sequence>
<keyword id="KW-0488">Methylation</keyword>
<keyword id="KW-0687">Ribonucleoprotein</keyword>
<keyword id="KW-0689">Ribosomal protein</keyword>
<keyword id="KW-0694">RNA-binding</keyword>
<keyword id="KW-0699">rRNA-binding</keyword>
<evidence type="ECO:0000255" key="1">
    <source>
        <dbReference type="HAMAP-Rule" id="MF_00736"/>
    </source>
</evidence>
<evidence type="ECO:0000305" key="2"/>
<organism>
    <name type="scientific">Shewanella sp. (strain W3-18-1)</name>
    <dbReference type="NCBI Taxonomy" id="351745"/>
    <lineage>
        <taxon>Bacteria</taxon>
        <taxon>Pseudomonadati</taxon>
        <taxon>Pseudomonadota</taxon>
        <taxon>Gammaproteobacteria</taxon>
        <taxon>Alteromonadales</taxon>
        <taxon>Shewanellaceae</taxon>
        <taxon>Shewanella</taxon>
    </lineage>
</organism>
<dbReference type="EMBL" id="CP000503">
    <property type="protein sequence ID" value="ABM22998.1"/>
    <property type="molecule type" value="Genomic_DNA"/>
</dbReference>
<dbReference type="RefSeq" id="WP_011787565.1">
    <property type="nucleotide sequence ID" value="NC_008750.1"/>
</dbReference>
<dbReference type="SMR" id="A1REA3"/>
<dbReference type="GeneID" id="67441749"/>
<dbReference type="KEGG" id="shw:Sputw3181_0145"/>
<dbReference type="HOGENOM" id="CLU_074237_2_0_6"/>
<dbReference type="Proteomes" id="UP000002597">
    <property type="component" value="Chromosome"/>
</dbReference>
<dbReference type="GO" id="GO:0022625">
    <property type="term" value="C:cytosolic large ribosomal subunit"/>
    <property type="evidence" value="ECO:0007669"/>
    <property type="project" value="TreeGrafter"/>
</dbReference>
<dbReference type="GO" id="GO:0070180">
    <property type="term" value="F:large ribosomal subunit rRNA binding"/>
    <property type="evidence" value="ECO:0007669"/>
    <property type="project" value="UniProtKB-UniRule"/>
</dbReference>
<dbReference type="GO" id="GO:0003735">
    <property type="term" value="F:structural constituent of ribosome"/>
    <property type="evidence" value="ECO:0007669"/>
    <property type="project" value="InterPro"/>
</dbReference>
<dbReference type="GO" id="GO:0006412">
    <property type="term" value="P:translation"/>
    <property type="evidence" value="ECO:0007669"/>
    <property type="project" value="UniProtKB-UniRule"/>
</dbReference>
<dbReference type="CDD" id="cd00349">
    <property type="entry name" value="Ribosomal_L11"/>
    <property type="match status" value="1"/>
</dbReference>
<dbReference type="FunFam" id="1.10.10.250:FF:000001">
    <property type="entry name" value="50S ribosomal protein L11"/>
    <property type="match status" value="1"/>
</dbReference>
<dbReference type="FunFam" id="3.30.1550.10:FF:000001">
    <property type="entry name" value="50S ribosomal protein L11"/>
    <property type="match status" value="1"/>
</dbReference>
<dbReference type="Gene3D" id="1.10.10.250">
    <property type="entry name" value="Ribosomal protein L11, C-terminal domain"/>
    <property type="match status" value="1"/>
</dbReference>
<dbReference type="Gene3D" id="3.30.1550.10">
    <property type="entry name" value="Ribosomal protein L11/L12, N-terminal domain"/>
    <property type="match status" value="1"/>
</dbReference>
<dbReference type="HAMAP" id="MF_00736">
    <property type="entry name" value="Ribosomal_uL11"/>
    <property type="match status" value="1"/>
</dbReference>
<dbReference type="InterPro" id="IPR000911">
    <property type="entry name" value="Ribosomal_uL11"/>
</dbReference>
<dbReference type="InterPro" id="IPR006519">
    <property type="entry name" value="Ribosomal_uL11_bac-typ"/>
</dbReference>
<dbReference type="InterPro" id="IPR020783">
    <property type="entry name" value="Ribosomal_uL11_C"/>
</dbReference>
<dbReference type="InterPro" id="IPR036769">
    <property type="entry name" value="Ribosomal_uL11_C_sf"/>
</dbReference>
<dbReference type="InterPro" id="IPR020785">
    <property type="entry name" value="Ribosomal_uL11_CS"/>
</dbReference>
<dbReference type="InterPro" id="IPR020784">
    <property type="entry name" value="Ribosomal_uL11_N"/>
</dbReference>
<dbReference type="InterPro" id="IPR036796">
    <property type="entry name" value="Ribosomal_uL11_N_sf"/>
</dbReference>
<dbReference type="NCBIfam" id="TIGR01632">
    <property type="entry name" value="L11_bact"/>
    <property type="match status" value="1"/>
</dbReference>
<dbReference type="PANTHER" id="PTHR11661">
    <property type="entry name" value="60S RIBOSOMAL PROTEIN L12"/>
    <property type="match status" value="1"/>
</dbReference>
<dbReference type="PANTHER" id="PTHR11661:SF1">
    <property type="entry name" value="LARGE RIBOSOMAL SUBUNIT PROTEIN UL11M"/>
    <property type="match status" value="1"/>
</dbReference>
<dbReference type="Pfam" id="PF00298">
    <property type="entry name" value="Ribosomal_L11"/>
    <property type="match status" value="1"/>
</dbReference>
<dbReference type="Pfam" id="PF03946">
    <property type="entry name" value="Ribosomal_L11_N"/>
    <property type="match status" value="1"/>
</dbReference>
<dbReference type="SMART" id="SM00649">
    <property type="entry name" value="RL11"/>
    <property type="match status" value="1"/>
</dbReference>
<dbReference type="SUPFAM" id="SSF54747">
    <property type="entry name" value="Ribosomal L11/L12e N-terminal domain"/>
    <property type="match status" value="1"/>
</dbReference>
<dbReference type="SUPFAM" id="SSF46906">
    <property type="entry name" value="Ribosomal protein L11, C-terminal domain"/>
    <property type="match status" value="1"/>
</dbReference>
<dbReference type="PROSITE" id="PS00359">
    <property type="entry name" value="RIBOSOMAL_L11"/>
    <property type="match status" value="1"/>
</dbReference>
<name>RL11_SHESW</name>
<protein>
    <recommendedName>
        <fullName evidence="1">Large ribosomal subunit protein uL11</fullName>
    </recommendedName>
    <alternativeName>
        <fullName evidence="2">50S ribosomal protein L11</fullName>
    </alternativeName>
</protein>
<feature type="chain" id="PRO_1000046268" description="Large ribosomal subunit protein uL11">
    <location>
        <begin position="1"/>
        <end position="142"/>
    </location>
</feature>
<proteinExistence type="inferred from homology"/>
<gene>
    <name evidence="1" type="primary">rplK</name>
    <name type="ordered locus">Sputw3181_0145</name>
</gene>
<comment type="function">
    <text evidence="1">Forms part of the ribosomal stalk which helps the ribosome interact with GTP-bound translation factors.</text>
</comment>
<comment type="subunit">
    <text evidence="1">Part of the ribosomal stalk of the 50S ribosomal subunit. Interacts with L10 and the large rRNA to form the base of the stalk. L10 forms an elongated spine to which L12 dimers bind in a sequential fashion forming a multimeric L10(L12)X complex.</text>
</comment>
<comment type="PTM">
    <text evidence="1">One or more lysine residues are methylated.</text>
</comment>
<comment type="similarity">
    <text evidence="1">Belongs to the universal ribosomal protein uL11 family.</text>
</comment>
<accession>A1REA3</accession>
<reference key="1">
    <citation type="submission" date="2006-12" db="EMBL/GenBank/DDBJ databases">
        <title>Complete sequence of Shewanella sp. W3-18-1.</title>
        <authorList>
            <consortium name="US DOE Joint Genome Institute"/>
            <person name="Copeland A."/>
            <person name="Lucas S."/>
            <person name="Lapidus A."/>
            <person name="Barry K."/>
            <person name="Detter J.C."/>
            <person name="Glavina del Rio T."/>
            <person name="Hammon N."/>
            <person name="Israni S."/>
            <person name="Dalin E."/>
            <person name="Tice H."/>
            <person name="Pitluck S."/>
            <person name="Chain P."/>
            <person name="Malfatti S."/>
            <person name="Shin M."/>
            <person name="Vergez L."/>
            <person name="Schmutz J."/>
            <person name="Larimer F."/>
            <person name="Land M."/>
            <person name="Hauser L."/>
            <person name="Kyrpides N."/>
            <person name="Lykidis A."/>
            <person name="Tiedje J."/>
            <person name="Richardson P."/>
        </authorList>
    </citation>
    <scope>NUCLEOTIDE SEQUENCE [LARGE SCALE GENOMIC DNA]</scope>
    <source>
        <strain>W3-18-1</strain>
    </source>
</reference>